<proteinExistence type="inferred from homology"/>
<keyword id="KW-0028">Amino-acid biosynthesis</keyword>
<keyword id="KW-0067">ATP-binding</keyword>
<keyword id="KW-0963">Cytoplasm</keyword>
<keyword id="KW-0418">Kinase</keyword>
<keyword id="KW-0547">Nucleotide-binding</keyword>
<keyword id="KW-1185">Reference proteome</keyword>
<keyword id="KW-0791">Threonine biosynthesis</keyword>
<keyword id="KW-0808">Transferase</keyword>
<accession>B2J7E8</accession>
<protein>
    <recommendedName>
        <fullName evidence="1">Homoserine kinase</fullName>
        <shortName evidence="1">HK</shortName>
        <shortName evidence="1">HSK</shortName>
        <ecNumber evidence="1">2.7.1.39</ecNumber>
    </recommendedName>
</protein>
<name>KHSE_NOSP7</name>
<reference key="1">
    <citation type="journal article" date="2013" name="Plant Physiol.">
        <title>A Nostoc punctiforme Sugar Transporter Necessary to Establish a Cyanobacterium-Plant Symbiosis.</title>
        <authorList>
            <person name="Ekman M."/>
            <person name="Picossi S."/>
            <person name="Campbell E.L."/>
            <person name="Meeks J.C."/>
            <person name="Flores E."/>
        </authorList>
    </citation>
    <scope>NUCLEOTIDE SEQUENCE [LARGE SCALE GENOMIC DNA]</scope>
    <source>
        <strain>ATCC 29133 / PCC 73102</strain>
    </source>
</reference>
<gene>
    <name evidence="1" type="primary">thrB</name>
    <name type="ordered locus">Npun_R2297</name>
</gene>
<comment type="function">
    <text evidence="1">Catalyzes the ATP-dependent phosphorylation of L-homoserine to L-homoserine phosphate.</text>
</comment>
<comment type="catalytic activity">
    <reaction evidence="1">
        <text>L-homoserine + ATP = O-phospho-L-homoserine + ADP + H(+)</text>
        <dbReference type="Rhea" id="RHEA:13985"/>
        <dbReference type="ChEBI" id="CHEBI:15378"/>
        <dbReference type="ChEBI" id="CHEBI:30616"/>
        <dbReference type="ChEBI" id="CHEBI:57476"/>
        <dbReference type="ChEBI" id="CHEBI:57590"/>
        <dbReference type="ChEBI" id="CHEBI:456216"/>
        <dbReference type="EC" id="2.7.1.39"/>
    </reaction>
</comment>
<comment type="pathway">
    <text evidence="1">Amino-acid biosynthesis; L-threonine biosynthesis; L-threonine from L-aspartate: step 4/5.</text>
</comment>
<comment type="subcellular location">
    <subcellularLocation>
        <location evidence="1">Cytoplasm</location>
    </subcellularLocation>
</comment>
<comment type="similarity">
    <text evidence="1">Belongs to the GHMP kinase family. Homoserine kinase subfamily.</text>
</comment>
<evidence type="ECO:0000255" key="1">
    <source>
        <dbReference type="HAMAP-Rule" id="MF_00384"/>
    </source>
</evidence>
<sequence>MSVVSAITVTVPATTANLGPGFDCIGAALKLYNEFRFTRLEEGGLIIHVSGTEAERVQTDESNLLYQAFVKFYQHIEQTPPTVKIEIKLGVPLARGLGSSATAIVGGLVAANQLEGATLSQSQVMELAIAMEGHPDNVVPALLGGCRLAATSGTAWEICDVPWHKDVVPVVAIPNFELSTSEARGVLPTEVSRADAIFNTAHLGLLLRGLETGNGQWLKTALQDKLHQPYRKALIPSYDAVNIAAVSAGAYGMVISGAGPTLLALADQLHSEAVEAAMLAAWQEEGITAEVRSLSLDTQGAKSF</sequence>
<organism>
    <name type="scientific">Nostoc punctiforme (strain ATCC 29133 / PCC 73102)</name>
    <dbReference type="NCBI Taxonomy" id="63737"/>
    <lineage>
        <taxon>Bacteria</taxon>
        <taxon>Bacillati</taxon>
        <taxon>Cyanobacteriota</taxon>
        <taxon>Cyanophyceae</taxon>
        <taxon>Nostocales</taxon>
        <taxon>Nostocaceae</taxon>
        <taxon>Nostoc</taxon>
    </lineage>
</organism>
<dbReference type="EC" id="2.7.1.39" evidence="1"/>
<dbReference type="EMBL" id="CP001037">
    <property type="protein sequence ID" value="ACC80883.1"/>
    <property type="molecule type" value="Genomic_DNA"/>
</dbReference>
<dbReference type="RefSeq" id="WP_012408880.1">
    <property type="nucleotide sequence ID" value="NC_010628.1"/>
</dbReference>
<dbReference type="SMR" id="B2J7E8"/>
<dbReference type="STRING" id="63737.Npun_R2297"/>
<dbReference type="EnsemblBacteria" id="ACC80883">
    <property type="protein sequence ID" value="ACC80883"/>
    <property type="gene ID" value="Npun_R2297"/>
</dbReference>
<dbReference type="KEGG" id="npu:Npun_R2297"/>
<dbReference type="eggNOG" id="COG0083">
    <property type="taxonomic scope" value="Bacteria"/>
</dbReference>
<dbReference type="HOGENOM" id="CLU_041243_0_2_3"/>
<dbReference type="OrthoDB" id="9769912at2"/>
<dbReference type="PhylomeDB" id="B2J7E8"/>
<dbReference type="UniPathway" id="UPA00050">
    <property type="reaction ID" value="UER00064"/>
</dbReference>
<dbReference type="Proteomes" id="UP000001191">
    <property type="component" value="Chromosome"/>
</dbReference>
<dbReference type="GO" id="GO:0005737">
    <property type="term" value="C:cytoplasm"/>
    <property type="evidence" value="ECO:0007669"/>
    <property type="project" value="UniProtKB-SubCell"/>
</dbReference>
<dbReference type="GO" id="GO:0005524">
    <property type="term" value="F:ATP binding"/>
    <property type="evidence" value="ECO:0007669"/>
    <property type="project" value="UniProtKB-UniRule"/>
</dbReference>
<dbReference type="GO" id="GO:0004413">
    <property type="term" value="F:homoserine kinase activity"/>
    <property type="evidence" value="ECO:0007669"/>
    <property type="project" value="UniProtKB-UniRule"/>
</dbReference>
<dbReference type="GO" id="GO:0009088">
    <property type="term" value="P:threonine biosynthetic process"/>
    <property type="evidence" value="ECO:0007669"/>
    <property type="project" value="UniProtKB-UniRule"/>
</dbReference>
<dbReference type="Gene3D" id="3.30.230.10">
    <property type="match status" value="1"/>
</dbReference>
<dbReference type="Gene3D" id="3.30.70.890">
    <property type="entry name" value="GHMP kinase, C-terminal domain"/>
    <property type="match status" value="1"/>
</dbReference>
<dbReference type="HAMAP" id="MF_00384">
    <property type="entry name" value="Homoser_kinase"/>
    <property type="match status" value="1"/>
</dbReference>
<dbReference type="InterPro" id="IPR013750">
    <property type="entry name" value="GHMP_kinase_C_dom"/>
</dbReference>
<dbReference type="InterPro" id="IPR036554">
    <property type="entry name" value="GHMP_kinase_C_sf"/>
</dbReference>
<dbReference type="InterPro" id="IPR006204">
    <property type="entry name" value="GHMP_kinase_N_dom"/>
</dbReference>
<dbReference type="InterPro" id="IPR006203">
    <property type="entry name" value="GHMP_knse_ATP-bd_CS"/>
</dbReference>
<dbReference type="InterPro" id="IPR000870">
    <property type="entry name" value="Homoserine_kinase"/>
</dbReference>
<dbReference type="InterPro" id="IPR020568">
    <property type="entry name" value="Ribosomal_Su5_D2-typ_SF"/>
</dbReference>
<dbReference type="InterPro" id="IPR014721">
    <property type="entry name" value="Ribsml_uS5_D2-typ_fold_subgr"/>
</dbReference>
<dbReference type="NCBIfam" id="NF002288">
    <property type="entry name" value="PRK01212.1-4"/>
    <property type="match status" value="1"/>
</dbReference>
<dbReference type="NCBIfam" id="TIGR00191">
    <property type="entry name" value="thrB"/>
    <property type="match status" value="1"/>
</dbReference>
<dbReference type="PANTHER" id="PTHR20861:SF1">
    <property type="entry name" value="HOMOSERINE KINASE"/>
    <property type="match status" value="1"/>
</dbReference>
<dbReference type="PANTHER" id="PTHR20861">
    <property type="entry name" value="HOMOSERINE/4-DIPHOSPHOCYTIDYL-2-C-METHYL-D-ERYTHRITOL KINASE"/>
    <property type="match status" value="1"/>
</dbReference>
<dbReference type="Pfam" id="PF08544">
    <property type="entry name" value="GHMP_kinases_C"/>
    <property type="match status" value="1"/>
</dbReference>
<dbReference type="Pfam" id="PF00288">
    <property type="entry name" value="GHMP_kinases_N"/>
    <property type="match status" value="1"/>
</dbReference>
<dbReference type="PIRSF" id="PIRSF000676">
    <property type="entry name" value="Homoser_kin"/>
    <property type="match status" value="1"/>
</dbReference>
<dbReference type="PRINTS" id="PR00958">
    <property type="entry name" value="HOMSERKINASE"/>
</dbReference>
<dbReference type="SUPFAM" id="SSF55060">
    <property type="entry name" value="GHMP Kinase, C-terminal domain"/>
    <property type="match status" value="1"/>
</dbReference>
<dbReference type="SUPFAM" id="SSF54211">
    <property type="entry name" value="Ribosomal protein S5 domain 2-like"/>
    <property type="match status" value="1"/>
</dbReference>
<dbReference type="PROSITE" id="PS00627">
    <property type="entry name" value="GHMP_KINASES_ATP"/>
    <property type="match status" value="1"/>
</dbReference>
<feature type="chain" id="PRO_1000122433" description="Homoserine kinase">
    <location>
        <begin position="1"/>
        <end position="304"/>
    </location>
</feature>
<feature type="binding site" evidence="1">
    <location>
        <begin position="92"/>
        <end position="102"/>
    </location>
    <ligand>
        <name>ATP</name>
        <dbReference type="ChEBI" id="CHEBI:30616"/>
    </ligand>
</feature>